<accession>Q62203</accession>
<evidence type="ECO:0000250" key="1">
    <source>
        <dbReference type="UniProtKB" id="Q15428"/>
    </source>
</evidence>
<evidence type="ECO:0000255" key="2">
    <source>
        <dbReference type="PROSITE-ProRule" id="PRU00130"/>
    </source>
</evidence>
<evidence type="ECO:0000256" key="3">
    <source>
        <dbReference type="SAM" id="MobiDB-lite"/>
    </source>
</evidence>
<evidence type="ECO:0000269" key="4">
    <source>
    </source>
</evidence>
<evidence type="ECO:0000305" key="5"/>
<evidence type="ECO:0007744" key="6">
    <source>
    </source>
</evidence>
<organism>
    <name type="scientific">Mus musculus</name>
    <name type="common">Mouse</name>
    <dbReference type="NCBI Taxonomy" id="10090"/>
    <lineage>
        <taxon>Eukaryota</taxon>
        <taxon>Metazoa</taxon>
        <taxon>Chordata</taxon>
        <taxon>Craniata</taxon>
        <taxon>Vertebrata</taxon>
        <taxon>Euteleostomi</taxon>
        <taxon>Mammalia</taxon>
        <taxon>Eutheria</taxon>
        <taxon>Euarchontoglires</taxon>
        <taxon>Glires</taxon>
        <taxon>Rodentia</taxon>
        <taxon>Myomorpha</taxon>
        <taxon>Muroidea</taxon>
        <taxon>Muridae</taxon>
        <taxon>Murinae</taxon>
        <taxon>Mus</taxon>
        <taxon>Mus</taxon>
    </lineage>
</organism>
<sequence length="475" mass="49911">MDFQHRPGGKTGSGGVASSSESNRDRRERLRQLALETIDINKDPYFMKNHLGSYECKLCLTLHNNEGSYLAHTQGKKHQTNLARRAAKEAKEAPAQPAPEQVKVEVKKFVKIGRPGYKVTKQRDTEMGQQSLLFQIDYPEIAEGIMPRHRFMSAYEQRIEPPDRRWQYLLMAAEPYETIAFKVPSREIDKAEGKFFFLQFHFKMEKPPAPPSLPAGPPGVKRPPPPLMNGLPPRPPLPDALPPPPPGGLPLPPMPPTGPAPSGPPGPPQMPPPAPGVHPPAPVVHPPTSGVHPPAPGVHPPAPVVHPPTSGVHPPAPGVHPPTPGVHPPAPGVHPPAPGVHPPAPGVHPPTPGVHPPAPGVHPPAPGVHPPAPGVHPPPSAGVHPQAPGVHPPAPAVHPQAPGVHPPAPGIHPQAPGVHPQPPPGVHPAAPGVHPQPPGVHPSNPGVHPAPMPPMLRPPLPSDGPGNMPPPPPGN</sequence>
<protein>
    <recommendedName>
        <fullName>Splicing factor 3A subunit 2</fullName>
    </recommendedName>
    <alternativeName>
        <fullName>SF3a66</fullName>
    </alternativeName>
    <alternativeName>
        <fullName>Spliceosome-associated protein 62</fullName>
        <shortName>SAP 62</shortName>
    </alternativeName>
</protein>
<comment type="function">
    <text evidence="1">Component of the 17S U2 SnRNP complex of the spliceosome, a large ribonucleoprotein complex that removes introns from transcribed pre-mRNAs. The 17S U2 SnRNP complex (1) directly participates in early spliceosome assembly and (2) mediates recognition of the intron branch site during pre-mRNA splicing by promoting the selection of the pre-mRNA branch-site adenosine, the nucleophile for the first step of splicing. Within the 17S U2 SnRNP complex, SF3A2 is part of the SF3A subcomplex that contributes to the assembly of the 17S U2 snRNP, and the subsequent assembly of the pre-spliceosome 'E' complex and the pre-catalytic spliceosome 'A' complex. Involved in pre-mRNA splicing as a component of pre-catalytic spliceosome 'B' complexes, including the Bact complex. Interacts directly with the duplex formed by U2 snRNA and the intron.</text>
</comment>
<comment type="subunit">
    <text evidence="1">Component of the 17S U2 SnRNP complex, a ribonucleoprotein complex that contains small nuclear RNA (snRNA) U2 and a number of specific proteins. Part of the SF3A subcomplex of the 17S U2 SnRNP complex which is composed of three subunits; SF3A3/SAP61, SF3A2/SAP62 and SF3A1/SAP114. SF3A associates with the splicing factor SF3B and a 12S RNA unit to form the mature 17S U2 small nuclear ribonucleoprotein complex (17S U2 snRNP). Identified in the spliceosome 'E' complex, a precursor of the spliceosome 'A' complex. Identified in the spliceosome 'A' and 'B' complexes. Identified in the spliceosome 'C' complex. Interacts with HTATSF1.</text>
</comment>
<comment type="subcellular location">
    <subcellularLocation>
        <location evidence="2">Nucleus</location>
    </subcellularLocation>
</comment>
<comment type="tissue specificity">
    <text evidence="4">Found in all tissues examined.</text>
</comment>
<comment type="similarity">
    <text evidence="5">Belongs to the SF3A2 family.</text>
</comment>
<feature type="chain" id="PRO_0000174316" description="Splicing factor 3A subunit 2">
    <location>
        <begin position="1"/>
        <end position="475"/>
    </location>
</feature>
<feature type="zinc finger region" description="Matrin-type" evidence="2">
    <location>
        <begin position="54"/>
        <end position="84"/>
    </location>
</feature>
<feature type="region of interest" description="Disordered" evidence="3">
    <location>
        <begin position="1"/>
        <end position="27"/>
    </location>
</feature>
<feature type="region of interest" description="Disordered" evidence="3">
    <location>
        <begin position="208"/>
        <end position="475"/>
    </location>
</feature>
<feature type="compositionally biased region" description="Pro residues" evidence="3">
    <location>
        <begin position="208"/>
        <end position="285"/>
    </location>
</feature>
<feature type="compositionally biased region" description="Pro residues" evidence="3">
    <location>
        <begin position="293"/>
        <end position="306"/>
    </location>
</feature>
<feature type="compositionally biased region" description="Pro residues" evidence="3">
    <location>
        <begin position="314"/>
        <end position="380"/>
    </location>
</feature>
<feature type="compositionally biased region" description="Pro residues" evidence="3">
    <location>
        <begin position="448"/>
        <end position="475"/>
    </location>
</feature>
<feature type="modified residue" description="N-acetylmethionine" evidence="1">
    <location>
        <position position="1"/>
    </location>
</feature>
<feature type="modified residue" description="N6-acetyllysine" evidence="6">
    <location>
        <position position="10"/>
    </location>
</feature>
<feature type="modified residue" description="Phosphoserine" evidence="1">
    <location>
        <position position="153"/>
    </location>
</feature>
<proteinExistence type="evidence at protein level"/>
<keyword id="KW-0007">Acetylation</keyword>
<keyword id="KW-0479">Metal-binding</keyword>
<keyword id="KW-0507">mRNA processing</keyword>
<keyword id="KW-0508">mRNA splicing</keyword>
<keyword id="KW-0539">Nucleus</keyword>
<keyword id="KW-0597">Phosphoprotein</keyword>
<keyword id="KW-1185">Reference proteome</keyword>
<keyword id="KW-0677">Repeat</keyword>
<keyword id="KW-0747">Spliceosome</keyword>
<keyword id="KW-0862">Zinc</keyword>
<keyword id="KW-0863">Zinc-finger</keyword>
<name>SF3A2_MOUSE</name>
<reference key="1">
    <citation type="journal article" date="1995" name="Hum. Mol. Genet.">
        <title>The genes for a spliceosome protein (SAP62) and the anti-Mullerian hormone (AMH) are contiguous.</title>
        <authorList>
            <person name="Dresser D.W."/>
            <person name="Hacker A."/>
            <person name="Lovell-Badge R."/>
            <person name="Guerrier D."/>
        </authorList>
    </citation>
    <scope>NUCLEOTIDE SEQUENCE [GENOMIC DNA]</scope>
    <scope>TISSUE SPECIFICITY</scope>
    <source>
        <strain>129</strain>
    </source>
</reference>
<reference key="2">
    <citation type="journal article" date="2001" name="Gene">
        <title>An expressed GNRP-like gene shares a bi-directional promoter with SF3A2 (SAP62) immediately upstream of AMH.</title>
        <authorList>
            <person name="Dresser D.W."/>
            <person name="Jamin S.P."/>
            <person name="Atkins C.J."/>
            <person name="Guerrier D."/>
        </authorList>
    </citation>
    <scope>SEQUENCE REVISION TO 101 AND 195-196</scope>
    <source>
        <strain>129</strain>
    </source>
</reference>
<reference key="3">
    <citation type="journal article" date="2010" name="Cell">
        <title>A tissue-specific atlas of mouse protein phosphorylation and expression.</title>
        <authorList>
            <person name="Huttlin E.L."/>
            <person name="Jedrychowski M.P."/>
            <person name="Elias J.E."/>
            <person name="Goswami T."/>
            <person name="Rad R."/>
            <person name="Beausoleil S.A."/>
            <person name="Villen J."/>
            <person name="Haas W."/>
            <person name="Sowa M.E."/>
            <person name="Gygi S.P."/>
        </authorList>
    </citation>
    <scope>IDENTIFICATION BY MASS SPECTROMETRY [LARGE SCALE ANALYSIS]</scope>
    <source>
        <tissue>Spleen</tissue>
        <tissue>Testis</tissue>
    </source>
</reference>
<reference key="4">
    <citation type="journal article" date="2013" name="Mol. Cell">
        <title>SIRT5-mediated lysine desuccinylation impacts diverse metabolic pathways.</title>
        <authorList>
            <person name="Park J."/>
            <person name="Chen Y."/>
            <person name="Tishkoff D.X."/>
            <person name="Peng C."/>
            <person name="Tan M."/>
            <person name="Dai L."/>
            <person name="Xie Z."/>
            <person name="Zhang Y."/>
            <person name="Zwaans B.M."/>
            <person name="Skinner M.E."/>
            <person name="Lombard D.B."/>
            <person name="Zhao Y."/>
        </authorList>
    </citation>
    <scope>ACETYLATION [LARGE SCALE ANALYSIS] AT LYS-10</scope>
    <scope>IDENTIFICATION BY MASS SPECTROMETRY [LARGE SCALE ANALYSIS]</scope>
    <source>
        <tissue>Embryonic fibroblast</tissue>
    </source>
</reference>
<dbReference type="EMBL" id="X83733">
    <property type="protein sequence ID" value="CAC10449.1"/>
    <property type="molecule type" value="Genomic_DNA"/>
</dbReference>
<dbReference type="SMR" id="Q62203"/>
<dbReference type="FunCoup" id="Q62203">
    <property type="interactions" value="960"/>
</dbReference>
<dbReference type="IntAct" id="Q62203">
    <property type="interactions" value="2"/>
</dbReference>
<dbReference type="STRING" id="10090.ENSMUSP00000117160"/>
<dbReference type="GlyGen" id="Q62203">
    <property type="glycosylation" value="3 sites, 1 O-linked glycan (1 site)"/>
</dbReference>
<dbReference type="iPTMnet" id="Q62203"/>
<dbReference type="PhosphoSitePlus" id="Q62203"/>
<dbReference type="PaxDb" id="10090-ENSMUSP00000117160"/>
<dbReference type="PeptideAtlas" id="Q62203"/>
<dbReference type="ProteomicsDB" id="256629"/>
<dbReference type="Pumba" id="Q62203"/>
<dbReference type="AGR" id="MGI:104912"/>
<dbReference type="MGI" id="MGI:104912">
    <property type="gene designation" value="Sf3a2"/>
</dbReference>
<dbReference type="eggNOG" id="KOG0227">
    <property type="taxonomic scope" value="Eukaryota"/>
</dbReference>
<dbReference type="InParanoid" id="Q62203"/>
<dbReference type="Reactome" id="R-MMU-72163">
    <property type="pathway name" value="mRNA Splicing - Major Pathway"/>
</dbReference>
<dbReference type="ChiTaRS" id="Sf3a2">
    <property type="organism name" value="mouse"/>
</dbReference>
<dbReference type="PRO" id="PR:Q62203"/>
<dbReference type="Proteomes" id="UP000000589">
    <property type="component" value="Unplaced"/>
</dbReference>
<dbReference type="RNAct" id="Q62203">
    <property type="molecule type" value="protein"/>
</dbReference>
<dbReference type="GO" id="GO:0005634">
    <property type="term" value="C:nucleus"/>
    <property type="evidence" value="ECO:0000250"/>
    <property type="project" value="MGI"/>
</dbReference>
<dbReference type="GO" id="GO:0005686">
    <property type="term" value="C:U2 snRNP"/>
    <property type="evidence" value="ECO:0000314"/>
    <property type="project" value="MGI"/>
</dbReference>
<dbReference type="GO" id="GO:0071005">
    <property type="term" value="C:U2-type precatalytic spliceosome"/>
    <property type="evidence" value="ECO:0000250"/>
    <property type="project" value="UniProtKB"/>
</dbReference>
<dbReference type="GO" id="GO:0003676">
    <property type="term" value="F:nucleic acid binding"/>
    <property type="evidence" value="ECO:0007669"/>
    <property type="project" value="InterPro"/>
</dbReference>
<dbReference type="GO" id="GO:0008270">
    <property type="term" value="F:zinc ion binding"/>
    <property type="evidence" value="ECO:0007669"/>
    <property type="project" value="UniProtKB-KW"/>
</dbReference>
<dbReference type="GO" id="GO:0000398">
    <property type="term" value="P:mRNA splicing, via spliceosome"/>
    <property type="evidence" value="ECO:0000250"/>
    <property type="project" value="UniProtKB"/>
</dbReference>
<dbReference type="GO" id="GO:0000375">
    <property type="term" value="P:RNA splicing, via transesterification reactions"/>
    <property type="evidence" value="ECO:0000304"/>
    <property type="project" value="MGI"/>
</dbReference>
<dbReference type="GO" id="GO:1903241">
    <property type="term" value="P:U2-type prespliceosome assembly"/>
    <property type="evidence" value="ECO:0000250"/>
    <property type="project" value="UniProtKB"/>
</dbReference>
<dbReference type="FunFam" id="3.30.160.60:FF:001216">
    <property type="entry name" value="Splicing factor 3A subunit 2"/>
    <property type="match status" value="1"/>
</dbReference>
<dbReference type="FunFam" id="2.60.40.2690:FF:000001">
    <property type="entry name" value="Splicing factor 3a, subunit 2"/>
    <property type="match status" value="1"/>
</dbReference>
<dbReference type="Gene3D" id="2.60.40.2690">
    <property type="match status" value="1"/>
</dbReference>
<dbReference type="InterPro" id="IPR000690">
    <property type="entry name" value="Matrin/U1-C_Znf_C2H2"/>
</dbReference>
<dbReference type="InterPro" id="IPR003604">
    <property type="entry name" value="Matrin/U1-like-C_Znf_C2H2"/>
</dbReference>
<dbReference type="InterPro" id="IPR052092">
    <property type="entry name" value="SF3A2"/>
</dbReference>
<dbReference type="InterPro" id="IPR031781">
    <property type="entry name" value="SF3A2_dom"/>
</dbReference>
<dbReference type="InterPro" id="IPR036236">
    <property type="entry name" value="Znf_C2H2_sf"/>
</dbReference>
<dbReference type="InterPro" id="IPR013087">
    <property type="entry name" value="Znf_C2H2_type"/>
</dbReference>
<dbReference type="PANTHER" id="PTHR23205">
    <property type="entry name" value="SPLICING FACTOR 3A SUBUNIT 2"/>
    <property type="match status" value="1"/>
</dbReference>
<dbReference type="PANTHER" id="PTHR23205:SF0">
    <property type="entry name" value="SPLICING FACTOR 3A SUBUNIT 2"/>
    <property type="match status" value="1"/>
</dbReference>
<dbReference type="Pfam" id="PF16835">
    <property type="entry name" value="SF3A2"/>
    <property type="match status" value="1"/>
</dbReference>
<dbReference type="Pfam" id="PF12874">
    <property type="entry name" value="zf-met"/>
    <property type="match status" value="1"/>
</dbReference>
<dbReference type="SMART" id="SM01050">
    <property type="entry name" value="CactinC_cactus"/>
    <property type="match status" value="1"/>
</dbReference>
<dbReference type="SMART" id="SM00451">
    <property type="entry name" value="ZnF_U1"/>
    <property type="match status" value="1"/>
</dbReference>
<dbReference type="SUPFAM" id="SSF57667">
    <property type="entry name" value="beta-beta-alpha zinc fingers"/>
    <property type="match status" value="1"/>
</dbReference>
<dbReference type="PROSITE" id="PS50171">
    <property type="entry name" value="ZF_MATRIN"/>
    <property type="match status" value="1"/>
</dbReference>
<gene>
    <name type="primary">Sf3a2</name>
    <name type="synonym">Sap62</name>
</gene>